<sequence length="221" mass="25591">MADEVILLDFWPSMFGMRTRIALEEKNVKFDYREQDLWNKSPILLEMNPVHKKIPVLIHNGNPVCESLIQIEYIDEVWPSKTPLLPSDPYQRAQAKFWGDFIDKKVYASARLIWGAKGEEHEAGKKEFIEILKTLESELGDKTYFGGETFGYVDIALIGFYSWFEAYEKFGSFSIEAECPKLIAWGKRCVERESVAKSLPDSEKIIKFVPELRKKLGIEIE</sequence>
<dbReference type="EC" id="2.5.1.18"/>
<dbReference type="EMBL" id="AC007651">
    <property type="protein sequence ID" value="AAD50015.1"/>
    <property type="molecule type" value="Genomic_DNA"/>
</dbReference>
<dbReference type="EMBL" id="CP002684">
    <property type="protein sequence ID" value="AEE29555.1"/>
    <property type="molecule type" value="Genomic_DNA"/>
</dbReference>
<dbReference type="EMBL" id="AK118907">
    <property type="protein sequence ID" value="BAC43490.1"/>
    <property type="molecule type" value="mRNA"/>
</dbReference>
<dbReference type="EMBL" id="BT005643">
    <property type="protein sequence ID" value="AAO64063.1"/>
    <property type="molecule type" value="mRNA"/>
</dbReference>
<dbReference type="PIR" id="H86307">
    <property type="entry name" value="H86307"/>
</dbReference>
<dbReference type="RefSeq" id="NP_173161.1">
    <property type="nucleotide sequence ID" value="NM_101579.4"/>
</dbReference>
<dbReference type="PDB" id="5G5A">
    <property type="method" value="X-ray"/>
    <property type="resolution" value="1.95 A"/>
    <property type="chains" value="A/B/C/D=1-221"/>
</dbReference>
<dbReference type="PDBsum" id="5G5A"/>
<dbReference type="SMR" id="Q9SHH7"/>
<dbReference type="BioGRID" id="23529">
    <property type="interactions" value="3"/>
</dbReference>
<dbReference type="FunCoup" id="Q9SHH7">
    <property type="interactions" value="158"/>
</dbReference>
<dbReference type="IntAct" id="Q9SHH7">
    <property type="interactions" value="2"/>
</dbReference>
<dbReference type="STRING" id="3702.Q9SHH7"/>
<dbReference type="iPTMnet" id="Q9SHH7"/>
<dbReference type="PaxDb" id="3702-AT1G17180.1"/>
<dbReference type="ProteomicsDB" id="247143"/>
<dbReference type="EnsemblPlants" id="AT1G17180.1">
    <property type="protein sequence ID" value="AT1G17180.1"/>
    <property type="gene ID" value="AT1G17180"/>
</dbReference>
<dbReference type="GeneID" id="838289"/>
<dbReference type="Gramene" id="AT1G17180.1">
    <property type="protein sequence ID" value="AT1G17180.1"/>
    <property type="gene ID" value="AT1G17180"/>
</dbReference>
<dbReference type="KEGG" id="ath:AT1G17180"/>
<dbReference type="Araport" id="AT1G17180"/>
<dbReference type="TAIR" id="AT1G17180">
    <property type="gene designation" value="GSTU25"/>
</dbReference>
<dbReference type="eggNOG" id="KOG0406">
    <property type="taxonomic scope" value="Eukaryota"/>
</dbReference>
<dbReference type="HOGENOM" id="CLU_011226_18_2_1"/>
<dbReference type="InParanoid" id="Q9SHH7"/>
<dbReference type="OMA" id="YSWFFAY"/>
<dbReference type="PhylomeDB" id="Q9SHH7"/>
<dbReference type="BioCyc" id="ARA:AT1G17180-MONOMER"/>
<dbReference type="BRENDA" id="2.5.1.18">
    <property type="organism ID" value="399"/>
</dbReference>
<dbReference type="PRO" id="PR:Q9SHH7"/>
<dbReference type="Proteomes" id="UP000006548">
    <property type="component" value="Chromosome 1"/>
</dbReference>
<dbReference type="ExpressionAtlas" id="Q9SHH7">
    <property type="expression patterns" value="baseline and differential"/>
</dbReference>
<dbReference type="GO" id="GO:0005737">
    <property type="term" value="C:cytoplasm"/>
    <property type="evidence" value="ECO:0000303"/>
    <property type="project" value="TAIR"/>
</dbReference>
<dbReference type="GO" id="GO:0005829">
    <property type="term" value="C:cytosol"/>
    <property type="evidence" value="ECO:0007669"/>
    <property type="project" value="UniProtKB-SubCell"/>
</dbReference>
<dbReference type="GO" id="GO:0004364">
    <property type="term" value="F:glutathione transferase activity"/>
    <property type="evidence" value="ECO:0000314"/>
    <property type="project" value="TAIR"/>
</dbReference>
<dbReference type="GO" id="GO:0046256">
    <property type="term" value="P:2,4,6-trinitrotoluene catabolic process"/>
    <property type="evidence" value="ECO:0000314"/>
    <property type="project" value="TAIR"/>
</dbReference>
<dbReference type="GO" id="GO:0006749">
    <property type="term" value="P:glutathione metabolic process"/>
    <property type="evidence" value="ECO:0007669"/>
    <property type="project" value="InterPro"/>
</dbReference>
<dbReference type="GO" id="GO:0009407">
    <property type="term" value="P:toxin catabolic process"/>
    <property type="evidence" value="ECO:0000304"/>
    <property type="project" value="TAIR"/>
</dbReference>
<dbReference type="CDD" id="cd03185">
    <property type="entry name" value="GST_C_Tau"/>
    <property type="match status" value="1"/>
</dbReference>
<dbReference type="CDD" id="cd03058">
    <property type="entry name" value="GST_N_Tau"/>
    <property type="match status" value="1"/>
</dbReference>
<dbReference type="FunFam" id="1.20.1050.10:FF:000018">
    <property type="entry name" value="Glutathione S-transferase U20"/>
    <property type="match status" value="1"/>
</dbReference>
<dbReference type="FunFam" id="3.40.30.10:FF:000014">
    <property type="entry name" value="Tau class glutathione S-transferase"/>
    <property type="match status" value="1"/>
</dbReference>
<dbReference type="Gene3D" id="1.20.1050.10">
    <property type="match status" value="1"/>
</dbReference>
<dbReference type="Gene3D" id="3.40.30.10">
    <property type="entry name" value="Glutaredoxin"/>
    <property type="match status" value="1"/>
</dbReference>
<dbReference type="InterPro" id="IPR010987">
    <property type="entry name" value="Glutathione-S-Trfase_C-like"/>
</dbReference>
<dbReference type="InterPro" id="IPR036282">
    <property type="entry name" value="Glutathione-S-Trfase_C_sf"/>
</dbReference>
<dbReference type="InterPro" id="IPR004045">
    <property type="entry name" value="Glutathione_S-Trfase_N"/>
</dbReference>
<dbReference type="InterPro" id="IPR045074">
    <property type="entry name" value="GST_C_Tau"/>
</dbReference>
<dbReference type="InterPro" id="IPR045073">
    <property type="entry name" value="Omega/Tau-like"/>
</dbReference>
<dbReference type="InterPro" id="IPR036249">
    <property type="entry name" value="Thioredoxin-like_sf"/>
</dbReference>
<dbReference type="PANTHER" id="PTHR11260:SF593">
    <property type="entry name" value="GLUTATHIONE S-TRANSFERASE U25"/>
    <property type="match status" value="1"/>
</dbReference>
<dbReference type="PANTHER" id="PTHR11260">
    <property type="entry name" value="GLUTATHIONE S-TRANSFERASE, GST, SUPERFAMILY, GST DOMAIN CONTAINING"/>
    <property type="match status" value="1"/>
</dbReference>
<dbReference type="Pfam" id="PF13410">
    <property type="entry name" value="GST_C_2"/>
    <property type="match status" value="1"/>
</dbReference>
<dbReference type="Pfam" id="PF02798">
    <property type="entry name" value="GST_N"/>
    <property type="match status" value="1"/>
</dbReference>
<dbReference type="SFLD" id="SFLDG01152">
    <property type="entry name" value="Main.3:_Omega-_and_Tau-like"/>
    <property type="match status" value="1"/>
</dbReference>
<dbReference type="SFLD" id="SFLDG00358">
    <property type="entry name" value="Main_(cytGST)"/>
    <property type="match status" value="1"/>
</dbReference>
<dbReference type="SUPFAM" id="SSF47616">
    <property type="entry name" value="GST C-terminal domain-like"/>
    <property type="match status" value="1"/>
</dbReference>
<dbReference type="SUPFAM" id="SSF52833">
    <property type="entry name" value="Thioredoxin-like"/>
    <property type="match status" value="1"/>
</dbReference>
<dbReference type="PROSITE" id="PS50405">
    <property type="entry name" value="GST_CTER"/>
    <property type="match status" value="1"/>
</dbReference>
<dbReference type="PROSITE" id="PS50404">
    <property type="entry name" value="GST_NTER"/>
    <property type="match status" value="1"/>
</dbReference>
<proteinExistence type="evidence at protein level"/>
<comment type="function">
    <text evidence="1">May be involved in the conjugation of reduced glutathione to a wide number of exogenous and endogenous hydrophobic electrophiles and have a detoxification role against certain herbicides.</text>
</comment>
<comment type="catalytic activity">
    <reaction>
        <text>RX + glutathione = an S-substituted glutathione + a halide anion + H(+)</text>
        <dbReference type="Rhea" id="RHEA:16437"/>
        <dbReference type="ChEBI" id="CHEBI:15378"/>
        <dbReference type="ChEBI" id="CHEBI:16042"/>
        <dbReference type="ChEBI" id="CHEBI:17792"/>
        <dbReference type="ChEBI" id="CHEBI:57925"/>
        <dbReference type="ChEBI" id="CHEBI:90779"/>
        <dbReference type="EC" id="2.5.1.18"/>
    </reaction>
</comment>
<comment type="subcellular location">
    <subcellularLocation>
        <location evidence="3">Cytoplasm</location>
        <location evidence="3">Cytosol</location>
    </subcellularLocation>
</comment>
<comment type="similarity">
    <text evidence="3">Belongs to the GST superfamily. Tau family.</text>
</comment>
<accession>Q9SHH7</accession>
<reference key="1">
    <citation type="journal article" date="2000" name="Nature">
        <title>Sequence and analysis of chromosome 1 of the plant Arabidopsis thaliana.</title>
        <authorList>
            <person name="Theologis A."/>
            <person name="Ecker J.R."/>
            <person name="Palm C.J."/>
            <person name="Federspiel N.A."/>
            <person name="Kaul S."/>
            <person name="White O."/>
            <person name="Alonso J."/>
            <person name="Altafi H."/>
            <person name="Araujo R."/>
            <person name="Bowman C.L."/>
            <person name="Brooks S.Y."/>
            <person name="Buehler E."/>
            <person name="Chan A."/>
            <person name="Chao Q."/>
            <person name="Chen H."/>
            <person name="Cheuk R.F."/>
            <person name="Chin C.W."/>
            <person name="Chung M.K."/>
            <person name="Conn L."/>
            <person name="Conway A.B."/>
            <person name="Conway A.R."/>
            <person name="Creasy T.H."/>
            <person name="Dewar K."/>
            <person name="Dunn P."/>
            <person name="Etgu P."/>
            <person name="Feldblyum T.V."/>
            <person name="Feng J.-D."/>
            <person name="Fong B."/>
            <person name="Fujii C.Y."/>
            <person name="Gill J.E."/>
            <person name="Goldsmith A.D."/>
            <person name="Haas B."/>
            <person name="Hansen N.F."/>
            <person name="Hughes B."/>
            <person name="Huizar L."/>
            <person name="Hunter J.L."/>
            <person name="Jenkins J."/>
            <person name="Johnson-Hopson C."/>
            <person name="Khan S."/>
            <person name="Khaykin E."/>
            <person name="Kim C.J."/>
            <person name="Koo H.L."/>
            <person name="Kremenetskaia I."/>
            <person name="Kurtz D.B."/>
            <person name="Kwan A."/>
            <person name="Lam B."/>
            <person name="Langin-Hooper S."/>
            <person name="Lee A."/>
            <person name="Lee J.M."/>
            <person name="Lenz C.A."/>
            <person name="Li J.H."/>
            <person name="Li Y.-P."/>
            <person name="Lin X."/>
            <person name="Liu S.X."/>
            <person name="Liu Z.A."/>
            <person name="Luros J.S."/>
            <person name="Maiti R."/>
            <person name="Marziali A."/>
            <person name="Militscher J."/>
            <person name="Miranda M."/>
            <person name="Nguyen M."/>
            <person name="Nierman W.C."/>
            <person name="Osborne B.I."/>
            <person name="Pai G."/>
            <person name="Peterson J."/>
            <person name="Pham P.K."/>
            <person name="Rizzo M."/>
            <person name="Rooney T."/>
            <person name="Rowley D."/>
            <person name="Sakano H."/>
            <person name="Salzberg S.L."/>
            <person name="Schwartz J.R."/>
            <person name="Shinn P."/>
            <person name="Southwick A.M."/>
            <person name="Sun H."/>
            <person name="Tallon L.J."/>
            <person name="Tambunga G."/>
            <person name="Toriumi M.J."/>
            <person name="Town C.D."/>
            <person name="Utterback T."/>
            <person name="Van Aken S."/>
            <person name="Vaysberg M."/>
            <person name="Vysotskaia V.S."/>
            <person name="Walker M."/>
            <person name="Wu D."/>
            <person name="Yu G."/>
            <person name="Fraser C.M."/>
            <person name="Venter J.C."/>
            <person name="Davis R.W."/>
        </authorList>
    </citation>
    <scope>NUCLEOTIDE SEQUENCE [LARGE SCALE GENOMIC DNA]</scope>
    <source>
        <strain>cv. Columbia</strain>
    </source>
</reference>
<reference key="2">
    <citation type="journal article" date="2017" name="Plant J.">
        <title>Araport11: a complete reannotation of the Arabidopsis thaliana reference genome.</title>
        <authorList>
            <person name="Cheng C.Y."/>
            <person name="Krishnakumar V."/>
            <person name="Chan A.P."/>
            <person name="Thibaud-Nissen F."/>
            <person name="Schobel S."/>
            <person name="Town C.D."/>
        </authorList>
    </citation>
    <scope>GENOME REANNOTATION</scope>
    <source>
        <strain>cv. Columbia</strain>
    </source>
</reference>
<reference key="3">
    <citation type="journal article" date="2002" name="Science">
        <title>Functional annotation of a full-length Arabidopsis cDNA collection.</title>
        <authorList>
            <person name="Seki M."/>
            <person name="Narusaka M."/>
            <person name="Kamiya A."/>
            <person name="Ishida J."/>
            <person name="Satou M."/>
            <person name="Sakurai T."/>
            <person name="Nakajima M."/>
            <person name="Enju A."/>
            <person name="Akiyama K."/>
            <person name="Oono Y."/>
            <person name="Muramatsu M."/>
            <person name="Hayashizaki Y."/>
            <person name="Kawai J."/>
            <person name="Carninci P."/>
            <person name="Itoh M."/>
            <person name="Ishii Y."/>
            <person name="Arakawa T."/>
            <person name="Shibata K."/>
            <person name="Shinagawa A."/>
            <person name="Shinozaki K."/>
        </authorList>
    </citation>
    <scope>NUCLEOTIDE SEQUENCE [LARGE SCALE MRNA]</scope>
    <source>
        <strain>cv. Columbia</strain>
    </source>
</reference>
<reference key="4">
    <citation type="journal article" date="2003" name="Science">
        <title>Empirical analysis of transcriptional activity in the Arabidopsis genome.</title>
        <authorList>
            <person name="Yamada K."/>
            <person name="Lim J."/>
            <person name="Dale J.M."/>
            <person name="Chen H."/>
            <person name="Shinn P."/>
            <person name="Palm C.J."/>
            <person name="Southwick A.M."/>
            <person name="Wu H.C."/>
            <person name="Kim C.J."/>
            <person name="Nguyen M."/>
            <person name="Pham P.K."/>
            <person name="Cheuk R.F."/>
            <person name="Karlin-Newmann G."/>
            <person name="Liu S.X."/>
            <person name="Lam B."/>
            <person name="Sakano H."/>
            <person name="Wu T."/>
            <person name="Yu G."/>
            <person name="Miranda M."/>
            <person name="Quach H.L."/>
            <person name="Tripp M."/>
            <person name="Chang C.H."/>
            <person name="Lee J.M."/>
            <person name="Toriumi M.J."/>
            <person name="Chan M.M."/>
            <person name="Tang C.C."/>
            <person name="Onodera C.S."/>
            <person name="Deng J.M."/>
            <person name="Akiyama K."/>
            <person name="Ansari Y."/>
            <person name="Arakawa T."/>
            <person name="Banh J."/>
            <person name="Banno F."/>
            <person name="Bowser L."/>
            <person name="Brooks S.Y."/>
            <person name="Carninci P."/>
            <person name="Chao Q."/>
            <person name="Choy N."/>
            <person name="Enju A."/>
            <person name="Goldsmith A.D."/>
            <person name="Gurjal M."/>
            <person name="Hansen N.F."/>
            <person name="Hayashizaki Y."/>
            <person name="Johnson-Hopson C."/>
            <person name="Hsuan V.W."/>
            <person name="Iida K."/>
            <person name="Karnes M."/>
            <person name="Khan S."/>
            <person name="Koesema E."/>
            <person name="Ishida J."/>
            <person name="Jiang P.X."/>
            <person name="Jones T."/>
            <person name="Kawai J."/>
            <person name="Kamiya A."/>
            <person name="Meyers C."/>
            <person name="Nakajima M."/>
            <person name="Narusaka M."/>
            <person name="Seki M."/>
            <person name="Sakurai T."/>
            <person name="Satou M."/>
            <person name="Tamse R."/>
            <person name="Vaysberg M."/>
            <person name="Wallender E.K."/>
            <person name="Wong C."/>
            <person name="Yamamura Y."/>
            <person name="Yuan S."/>
            <person name="Shinozaki K."/>
            <person name="Davis R.W."/>
            <person name="Theologis A."/>
            <person name="Ecker J.R."/>
        </authorList>
    </citation>
    <scope>NUCLEOTIDE SEQUENCE [LARGE SCALE MRNA]</scope>
    <source>
        <strain>cv. Columbia</strain>
    </source>
</reference>
<reference key="5">
    <citation type="journal article" date="2002" name="Plant Mol. Biol.">
        <title>Probing the diversity of the Arabidopsis glutathione S-transferase gene family.</title>
        <authorList>
            <person name="Wagner U."/>
            <person name="Edwards R."/>
            <person name="Dixon D.P."/>
            <person name="Mauch F."/>
        </authorList>
    </citation>
    <scope>GENE FAMILY</scope>
    <scope>NOMENCLATURE</scope>
</reference>
<reference key="6">
    <citation type="journal article" date="2012" name="Mol. Cell. Proteomics">
        <title>Comparative large-scale characterisation of plant vs. mammal proteins reveals similar and idiosyncratic N-alpha acetylation features.</title>
        <authorList>
            <person name="Bienvenut W.V."/>
            <person name="Sumpton D."/>
            <person name="Martinez A."/>
            <person name="Lilla S."/>
            <person name="Espagne C."/>
            <person name="Meinnel T."/>
            <person name="Giglione C."/>
        </authorList>
    </citation>
    <scope>ACETYLATION [LARGE SCALE ANALYSIS] AT ALA-2</scope>
    <scope>CLEAVAGE OF INITIATOR METHIONINE [LARGE SCALE ANALYSIS]</scope>
    <scope>IDENTIFICATION BY MASS SPECTROMETRY [LARGE SCALE ANALYSIS]</scope>
</reference>
<gene>
    <name type="primary">GSTU25</name>
    <name type="ordered locus">At1g17180</name>
    <name type="ORF">F20D23.12A</name>
</gene>
<keyword id="KW-0002">3D-structure</keyword>
<keyword id="KW-0007">Acetylation</keyword>
<keyword id="KW-0963">Cytoplasm</keyword>
<keyword id="KW-0216">Detoxification</keyword>
<keyword id="KW-0597">Phosphoprotein</keyword>
<keyword id="KW-1185">Reference proteome</keyword>
<keyword id="KW-0808">Transferase</keyword>
<name>GSTUP_ARATH</name>
<organism>
    <name type="scientific">Arabidopsis thaliana</name>
    <name type="common">Mouse-ear cress</name>
    <dbReference type="NCBI Taxonomy" id="3702"/>
    <lineage>
        <taxon>Eukaryota</taxon>
        <taxon>Viridiplantae</taxon>
        <taxon>Streptophyta</taxon>
        <taxon>Embryophyta</taxon>
        <taxon>Tracheophyta</taxon>
        <taxon>Spermatophyta</taxon>
        <taxon>Magnoliopsida</taxon>
        <taxon>eudicotyledons</taxon>
        <taxon>Gunneridae</taxon>
        <taxon>Pentapetalae</taxon>
        <taxon>rosids</taxon>
        <taxon>malvids</taxon>
        <taxon>Brassicales</taxon>
        <taxon>Brassicaceae</taxon>
        <taxon>Camelineae</taxon>
        <taxon>Arabidopsis</taxon>
    </lineage>
</organism>
<evidence type="ECO:0000250" key="1"/>
<evidence type="ECO:0000250" key="2">
    <source>
        <dbReference type="UniProtKB" id="Q9ZW27"/>
    </source>
</evidence>
<evidence type="ECO:0000305" key="3"/>
<evidence type="ECO:0007744" key="4">
    <source>
    </source>
</evidence>
<evidence type="ECO:0007829" key="5">
    <source>
        <dbReference type="PDB" id="5G5A"/>
    </source>
</evidence>
<feature type="initiator methionine" description="Removed" evidence="4">
    <location>
        <position position="1"/>
    </location>
</feature>
<feature type="chain" id="PRO_0000413570" description="Glutathione S-transferase U25">
    <location>
        <begin position="2"/>
        <end position="221"/>
    </location>
</feature>
<feature type="domain" description="GST N-terminal">
    <location>
        <begin position="3"/>
        <end position="82"/>
    </location>
</feature>
<feature type="domain" description="GST C-terminal">
    <location>
        <begin position="88"/>
        <end position="208"/>
    </location>
</feature>
<feature type="binding site" evidence="1">
    <location>
        <begin position="13"/>
        <end position="14"/>
    </location>
    <ligand>
        <name>glutathione</name>
        <dbReference type="ChEBI" id="CHEBI:57925"/>
    </ligand>
</feature>
<feature type="binding site" evidence="1">
    <location>
        <begin position="39"/>
        <end position="40"/>
    </location>
    <ligand>
        <name>glutathione</name>
        <dbReference type="ChEBI" id="CHEBI:57925"/>
    </ligand>
</feature>
<feature type="binding site" evidence="1">
    <location>
        <begin position="53"/>
        <end position="54"/>
    </location>
    <ligand>
        <name>glutathione</name>
        <dbReference type="ChEBI" id="CHEBI:57925"/>
    </ligand>
</feature>
<feature type="binding site" evidence="1">
    <location>
        <begin position="66"/>
        <end position="67"/>
    </location>
    <ligand>
        <name>glutathione</name>
        <dbReference type="ChEBI" id="CHEBI:57925"/>
    </ligand>
</feature>
<feature type="modified residue" description="N-acetylalanine" evidence="4">
    <location>
        <position position="2"/>
    </location>
</feature>
<feature type="modified residue" description="Phosphothreonine" evidence="2">
    <location>
        <position position="149"/>
    </location>
</feature>
<feature type="strand" evidence="5">
    <location>
        <begin position="5"/>
        <end position="9"/>
    </location>
</feature>
<feature type="helix" evidence="5">
    <location>
        <begin position="14"/>
        <end position="25"/>
    </location>
</feature>
<feature type="strand" evidence="5">
    <location>
        <begin position="31"/>
        <end position="34"/>
    </location>
</feature>
<feature type="helix" evidence="5">
    <location>
        <begin position="42"/>
        <end position="47"/>
    </location>
</feature>
<feature type="turn" evidence="5">
    <location>
        <begin position="49"/>
        <end position="51"/>
    </location>
</feature>
<feature type="strand" evidence="5">
    <location>
        <begin position="56"/>
        <end position="59"/>
    </location>
</feature>
<feature type="strand" evidence="5">
    <location>
        <begin position="62"/>
        <end position="66"/>
    </location>
</feature>
<feature type="helix" evidence="5">
    <location>
        <begin position="67"/>
        <end position="77"/>
    </location>
</feature>
<feature type="helix" evidence="5">
    <location>
        <begin position="89"/>
        <end position="115"/>
    </location>
</feature>
<feature type="helix" evidence="5">
    <location>
        <begin position="118"/>
        <end position="139"/>
    </location>
</feature>
<feature type="helix" evidence="5">
    <location>
        <begin position="152"/>
        <end position="161"/>
    </location>
</feature>
<feature type="helix" evidence="5">
    <location>
        <begin position="164"/>
        <end position="171"/>
    </location>
</feature>
<feature type="helix" evidence="5">
    <location>
        <begin position="175"/>
        <end position="178"/>
    </location>
</feature>
<feature type="helix" evidence="5">
    <location>
        <begin position="180"/>
        <end position="190"/>
    </location>
</feature>
<feature type="helix" evidence="5">
    <location>
        <begin position="193"/>
        <end position="198"/>
    </location>
</feature>
<feature type="helix" evidence="5">
    <location>
        <begin position="202"/>
        <end position="215"/>
    </location>
</feature>
<protein>
    <recommendedName>
        <fullName>Glutathione S-transferase U25</fullName>
        <shortName>AtGSTU25</shortName>
        <ecNumber>2.5.1.18</ecNumber>
    </recommendedName>
    <alternativeName>
        <fullName>GST class-tau member 25</fullName>
    </alternativeName>
</protein>